<proteinExistence type="inferred from homology"/>
<name>P2XC_DICDI</name>
<sequence>MLDWDSILAYNTIKVVRIRDRRLGILHLIFMIAIISYVVIYSAIIKKGYLSIEEPVGSIRTSLWSPNQFNGNESYCKNNAKPYPYEKLDCVYYDDALALYPIGDDVGFTASTRIEISDQKANCSLMNPSCKFKTFNYSNVYLADIESFTVLIDHTMYAPSSQIQFNGGDLSGYVLDQNGNEIQLNESVNVIGVEGKPDVLEISKLLEFAGVNLDDPSLTNSSNPIRYDGCVLFVFIEYSNTFSYDLNKIKYVYSIKLVDDTIYNIPEVVILDDVNSRLYYKRHAIRLIFIQTGVIGSFNFQSLLLTLVSGLGLLTVSTLIVDQLAIRFLPQRKSYSSLKFQTTESFKMKKKIVNDDGEDKLYHNIEAL</sequence>
<organism>
    <name type="scientific">Dictyostelium discoideum</name>
    <name type="common">Social amoeba</name>
    <dbReference type="NCBI Taxonomy" id="44689"/>
    <lineage>
        <taxon>Eukaryota</taxon>
        <taxon>Amoebozoa</taxon>
        <taxon>Evosea</taxon>
        <taxon>Eumycetozoa</taxon>
        <taxon>Dictyostelia</taxon>
        <taxon>Dictyosteliales</taxon>
        <taxon>Dictyosteliaceae</taxon>
        <taxon>Dictyostelium</taxon>
    </lineage>
</organism>
<dbReference type="EMBL" id="AAFI02000013">
    <property type="protein sequence ID" value="EAL69876.1"/>
    <property type="molecule type" value="Genomic_DNA"/>
</dbReference>
<dbReference type="RefSeq" id="XP_643831.1">
    <property type="nucleotide sequence ID" value="XM_638739.1"/>
</dbReference>
<dbReference type="FunCoup" id="Q553Y0">
    <property type="interactions" value="6"/>
</dbReference>
<dbReference type="STRING" id="44689.Q553Y0"/>
<dbReference type="PaxDb" id="44689-DDB0238363"/>
<dbReference type="EnsemblProtists" id="EAL69876">
    <property type="protein sequence ID" value="EAL69876"/>
    <property type="gene ID" value="DDB_G0275191"/>
</dbReference>
<dbReference type="GeneID" id="8619878"/>
<dbReference type="KEGG" id="ddi:DDB_G0275191"/>
<dbReference type="dictyBase" id="DDB_G0275191">
    <property type="gene designation" value="p2xC"/>
</dbReference>
<dbReference type="VEuPathDB" id="AmoebaDB:DDB_G0275191"/>
<dbReference type="eggNOG" id="ENOG502RE1D">
    <property type="taxonomic scope" value="Eukaryota"/>
</dbReference>
<dbReference type="HOGENOM" id="CLU_060033_0_0_1"/>
<dbReference type="InParanoid" id="Q553Y0"/>
<dbReference type="OMA" id="ASCEDSF"/>
<dbReference type="PhylomeDB" id="Q553Y0"/>
<dbReference type="Reactome" id="R-DDI-139853">
    <property type="pathway name" value="Elevation of cytosolic Ca2+ levels"/>
</dbReference>
<dbReference type="Reactome" id="R-DDI-418346">
    <property type="pathway name" value="Platelet homeostasis"/>
</dbReference>
<dbReference type="Reactome" id="R-DDI-6798695">
    <property type="pathway name" value="Neutrophil degranulation"/>
</dbReference>
<dbReference type="Reactome" id="R-DDI-844456">
    <property type="pathway name" value="The NLRP3 inflammasome"/>
</dbReference>
<dbReference type="PRO" id="PR:Q553Y0"/>
<dbReference type="Proteomes" id="UP000002195">
    <property type="component" value="Chromosome 2"/>
</dbReference>
<dbReference type="GO" id="GO:0031164">
    <property type="term" value="C:contractile vacuolar membrane"/>
    <property type="evidence" value="ECO:0000314"/>
    <property type="project" value="dictyBase"/>
</dbReference>
<dbReference type="GO" id="GO:0035381">
    <property type="term" value="F:ATP-gated ion channel activity"/>
    <property type="evidence" value="ECO:0000318"/>
    <property type="project" value="GO_Central"/>
</dbReference>
<dbReference type="GO" id="GO:0140417">
    <property type="term" value="F:intracellularly ATP-gated calcium channel activity"/>
    <property type="evidence" value="ECO:0000316"/>
    <property type="project" value="dictyBase"/>
</dbReference>
<dbReference type="GO" id="GO:0070588">
    <property type="term" value="P:calcium ion transmembrane transport"/>
    <property type="evidence" value="ECO:0000316"/>
    <property type="project" value="dictyBase"/>
</dbReference>
<dbReference type="GO" id="GO:0071476">
    <property type="term" value="P:cellular hypotonic response"/>
    <property type="evidence" value="ECO:0000316"/>
    <property type="project" value="dictyBase"/>
</dbReference>
<dbReference type="GO" id="GO:0050848">
    <property type="term" value="P:regulation of calcium-mediated signaling"/>
    <property type="evidence" value="ECO:0000316"/>
    <property type="project" value="dictyBase"/>
</dbReference>
<dbReference type="FunFam" id="1.10.287.940:FF:000012">
    <property type="entry name" value="P2X receptor A"/>
    <property type="match status" value="1"/>
</dbReference>
<dbReference type="FunFam" id="1.10.287.940:FF:000010">
    <property type="entry name" value="P2X receptor E"/>
    <property type="match status" value="1"/>
</dbReference>
<dbReference type="Gene3D" id="1.10.287.940">
    <property type="entry name" value="atp-gated p2x4 ion channel"/>
    <property type="match status" value="2"/>
</dbReference>
<dbReference type="PANTHER" id="PTHR10125">
    <property type="entry name" value="P2X PURINOCEPTOR"/>
    <property type="match status" value="1"/>
</dbReference>
<dbReference type="PANTHER" id="PTHR10125:SF27">
    <property type="entry name" value="P2X RECEPTOR A-RELATED"/>
    <property type="match status" value="1"/>
</dbReference>
<dbReference type="Pfam" id="PF00864">
    <property type="entry name" value="P2X_receptor"/>
    <property type="match status" value="2"/>
</dbReference>
<accession>Q553Y0</accession>
<gene>
    <name type="primary">p2xC</name>
    <name type="ORF">DDB_G0275191</name>
</gene>
<keyword id="KW-0407">Ion channel</keyword>
<keyword id="KW-0406">Ion transport</keyword>
<keyword id="KW-1071">Ligand-gated ion channel</keyword>
<keyword id="KW-0472">Membrane</keyword>
<keyword id="KW-0675">Receptor</keyword>
<keyword id="KW-1185">Reference proteome</keyword>
<keyword id="KW-0812">Transmembrane</keyword>
<keyword id="KW-1133">Transmembrane helix</keyword>
<keyword id="KW-0813">Transport</keyword>
<keyword id="KW-0926">Vacuole</keyword>
<reference key="1">
    <citation type="journal article" date="2002" name="Nature">
        <title>Sequence and analysis of chromosome 2 of Dictyostelium discoideum.</title>
        <authorList>
            <person name="Gloeckner G."/>
            <person name="Eichinger L."/>
            <person name="Szafranski K."/>
            <person name="Pachebat J.A."/>
            <person name="Bankier A.T."/>
            <person name="Dear P.H."/>
            <person name="Lehmann R."/>
            <person name="Baumgart C."/>
            <person name="Parra G."/>
            <person name="Abril J.F."/>
            <person name="Guigo R."/>
            <person name="Kumpf K."/>
            <person name="Tunggal B."/>
            <person name="Cox E.C."/>
            <person name="Quail M.A."/>
            <person name="Platzer M."/>
            <person name="Rosenthal A."/>
            <person name="Noegel A.A."/>
        </authorList>
    </citation>
    <scope>NUCLEOTIDE SEQUENCE [LARGE SCALE GENOMIC DNA]</scope>
    <source>
        <strain>AX4</strain>
    </source>
</reference>
<reference key="2">
    <citation type="journal article" date="2005" name="Nature">
        <title>The genome of the social amoeba Dictyostelium discoideum.</title>
        <authorList>
            <person name="Eichinger L."/>
            <person name="Pachebat J.A."/>
            <person name="Gloeckner G."/>
            <person name="Rajandream M.A."/>
            <person name="Sucgang R."/>
            <person name="Berriman M."/>
            <person name="Song J."/>
            <person name="Olsen R."/>
            <person name="Szafranski K."/>
            <person name="Xu Q."/>
            <person name="Tunggal B."/>
            <person name="Kummerfeld S."/>
            <person name="Madera M."/>
            <person name="Konfortov B.A."/>
            <person name="Rivero F."/>
            <person name="Bankier A.T."/>
            <person name="Lehmann R."/>
            <person name="Hamlin N."/>
            <person name="Davies R."/>
            <person name="Gaudet P."/>
            <person name="Fey P."/>
            <person name="Pilcher K."/>
            <person name="Chen G."/>
            <person name="Saunders D."/>
            <person name="Sodergren E.J."/>
            <person name="Davis P."/>
            <person name="Kerhornou A."/>
            <person name="Nie X."/>
            <person name="Hall N."/>
            <person name="Anjard C."/>
            <person name="Hemphill L."/>
            <person name="Bason N."/>
            <person name="Farbrother P."/>
            <person name="Desany B."/>
            <person name="Just E."/>
            <person name="Morio T."/>
            <person name="Rost R."/>
            <person name="Churcher C.M."/>
            <person name="Cooper J."/>
            <person name="Haydock S."/>
            <person name="van Driessche N."/>
            <person name="Cronin A."/>
            <person name="Goodhead I."/>
            <person name="Muzny D.M."/>
            <person name="Mourier T."/>
            <person name="Pain A."/>
            <person name="Lu M."/>
            <person name="Harper D."/>
            <person name="Lindsay R."/>
            <person name="Hauser H."/>
            <person name="James K.D."/>
            <person name="Quiles M."/>
            <person name="Madan Babu M."/>
            <person name="Saito T."/>
            <person name="Buchrieser C."/>
            <person name="Wardroper A."/>
            <person name="Felder M."/>
            <person name="Thangavelu M."/>
            <person name="Johnson D."/>
            <person name="Knights A."/>
            <person name="Loulseged H."/>
            <person name="Mungall K.L."/>
            <person name="Oliver K."/>
            <person name="Price C."/>
            <person name="Quail M.A."/>
            <person name="Urushihara H."/>
            <person name="Hernandez J."/>
            <person name="Rabbinowitsch E."/>
            <person name="Steffen D."/>
            <person name="Sanders M."/>
            <person name="Ma J."/>
            <person name="Kohara Y."/>
            <person name="Sharp S."/>
            <person name="Simmonds M.N."/>
            <person name="Spiegler S."/>
            <person name="Tivey A."/>
            <person name="Sugano S."/>
            <person name="White B."/>
            <person name="Walker D."/>
            <person name="Woodward J.R."/>
            <person name="Winckler T."/>
            <person name="Tanaka Y."/>
            <person name="Shaulsky G."/>
            <person name="Schleicher M."/>
            <person name="Weinstock G.M."/>
            <person name="Rosenthal A."/>
            <person name="Cox E.C."/>
            <person name="Chisholm R.L."/>
            <person name="Gibbs R.A."/>
            <person name="Loomis W.F."/>
            <person name="Platzer M."/>
            <person name="Kay R.R."/>
            <person name="Williams J.G."/>
            <person name="Dear P.H."/>
            <person name="Noegel A.A."/>
            <person name="Barrell B.G."/>
            <person name="Kuspa A."/>
        </authorList>
    </citation>
    <scope>NUCLEOTIDE SEQUENCE [LARGE SCALE GENOMIC DNA]</scope>
    <source>
        <strain>AX4</strain>
    </source>
</reference>
<reference key="3">
    <citation type="journal article" date="2009" name="J. Biol. Chem.">
        <title>Functional characterization of intracellular Dictyostelium discoideum P2X receptors.</title>
        <authorList>
            <person name="Ludlow M.J."/>
            <person name="Durai L."/>
            <person name="Ennion S.J."/>
        </authorList>
    </citation>
    <scope>FUNCTION</scope>
    <scope>SUBCELLULAR LOCATION</scope>
    <scope>DISRUPTION PHENOTYPE</scope>
</reference>
<protein>
    <recommendedName>
        <fullName>P2X receptor C</fullName>
        <shortName>P2XC</shortName>
    </recommendedName>
</protein>
<evidence type="ECO:0000255" key="1"/>
<evidence type="ECO:0000269" key="2">
    <source>
    </source>
</evidence>
<evidence type="ECO:0000305" key="3"/>
<feature type="chain" id="PRO_0000390413" description="P2X receptor C">
    <location>
        <begin position="1"/>
        <end position="368"/>
    </location>
</feature>
<feature type="topological domain" description="Cytoplasmic" evidence="1">
    <location>
        <begin position="1"/>
        <end position="24"/>
    </location>
</feature>
<feature type="transmembrane region" description="Helical" evidence="1">
    <location>
        <begin position="25"/>
        <end position="45"/>
    </location>
</feature>
<feature type="topological domain" description="Lumenal" evidence="1">
    <location>
        <begin position="46"/>
        <end position="368"/>
    </location>
</feature>
<feature type="region of interest" description="Pore-forming motif" evidence="1">
    <location>
        <begin position="282"/>
        <end position="295"/>
    </location>
</feature>
<comment type="function">
    <text evidence="2">P2X receptors are ligand-gated ion channels that play a role in intracellular calcium signaling. ATP does not evoke inward currents in p2xC. Not essential for osmoregulation.</text>
</comment>
<comment type="subcellular location">
    <subcellularLocation>
        <location evidence="2">Contractile vacuole membrane</location>
    </subcellularLocation>
    <text>Ligand binding domain within the lumen of the vacuole.</text>
</comment>
<comment type="disruption phenotype">
    <text evidence="2">Null cells are still capable of osmoregulation and do not show any noticeable differences in their sensitivity to hypotonic conditions. Quintuple p2xA/p2xB/p2xC/p2xD/p2xE null cells displayed slight delay in their osmoregulatory response, but are still capable of regulating their cell volume in water. Extracellular purinergic response to ATP persists in the quintuple null cells and p2xC single null strains with no alteration in the kinetics of the response, but the magnitude of the response is lower. Responses to the calmodulin antagonist calmidazolium are reduced and intracellular calcium signaling is disrupted in quintuple null cells. The presence of copper prevented both wild type and quintuple null cells from undergoing an osmoregulatory decrease in cell volume. No obvious morphological phenotype was apparent in the p2xC or quintuple p2x null strains. The quintuple null strain however did grow slightly slower than wild type in shaking axenic cultures.</text>
</comment>
<comment type="similarity">
    <text evidence="3">Belongs to the P2X receptor family.</text>
</comment>